<proteinExistence type="evidence at protein level"/>
<gene>
    <name evidence="8 10" type="primary">MICU3</name>
    <name evidence="10" type="synonym">EFHA2</name>
</gene>
<reference key="1">
    <citation type="journal article" date="2006" name="Nature">
        <title>DNA sequence and analysis of human chromosome 8.</title>
        <authorList>
            <person name="Nusbaum C."/>
            <person name="Mikkelsen T.S."/>
            <person name="Zody M.C."/>
            <person name="Asakawa S."/>
            <person name="Taudien S."/>
            <person name="Garber M."/>
            <person name="Kodira C.D."/>
            <person name="Schueler M.G."/>
            <person name="Shimizu A."/>
            <person name="Whittaker C.A."/>
            <person name="Chang J.L."/>
            <person name="Cuomo C.A."/>
            <person name="Dewar K."/>
            <person name="FitzGerald M.G."/>
            <person name="Yang X."/>
            <person name="Allen N.R."/>
            <person name="Anderson S."/>
            <person name="Asakawa T."/>
            <person name="Blechschmidt K."/>
            <person name="Bloom T."/>
            <person name="Borowsky M.L."/>
            <person name="Butler J."/>
            <person name="Cook A."/>
            <person name="Corum B."/>
            <person name="DeArellano K."/>
            <person name="DeCaprio D."/>
            <person name="Dooley K.T."/>
            <person name="Dorris L. III"/>
            <person name="Engels R."/>
            <person name="Gloeckner G."/>
            <person name="Hafez N."/>
            <person name="Hagopian D.S."/>
            <person name="Hall J.L."/>
            <person name="Ishikawa S.K."/>
            <person name="Jaffe D.B."/>
            <person name="Kamat A."/>
            <person name="Kudoh J."/>
            <person name="Lehmann R."/>
            <person name="Lokitsang T."/>
            <person name="Macdonald P."/>
            <person name="Major J.E."/>
            <person name="Matthews C.D."/>
            <person name="Mauceli E."/>
            <person name="Menzel U."/>
            <person name="Mihalev A.H."/>
            <person name="Minoshima S."/>
            <person name="Murayama Y."/>
            <person name="Naylor J.W."/>
            <person name="Nicol R."/>
            <person name="Nguyen C."/>
            <person name="O'Leary S.B."/>
            <person name="O'Neill K."/>
            <person name="Parker S.C.J."/>
            <person name="Polley A."/>
            <person name="Raymond C.K."/>
            <person name="Reichwald K."/>
            <person name="Rodriguez J."/>
            <person name="Sasaki T."/>
            <person name="Schilhabel M."/>
            <person name="Siddiqui R."/>
            <person name="Smith C.L."/>
            <person name="Sneddon T.P."/>
            <person name="Talamas J.A."/>
            <person name="Tenzin P."/>
            <person name="Topham K."/>
            <person name="Venkataraman V."/>
            <person name="Wen G."/>
            <person name="Yamazaki S."/>
            <person name="Young S.K."/>
            <person name="Zeng Q."/>
            <person name="Zimmer A.R."/>
            <person name="Rosenthal A."/>
            <person name="Birren B.W."/>
            <person name="Platzer M."/>
            <person name="Shimizu N."/>
            <person name="Lander E.S."/>
        </authorList>
    </citation>
    <scope>NUCLEOTIDE SEQUENCE [LARGE SCALE GENOMIC DNA]</scope>
</reference>
<reference key="2">
    <citation type="journal article" date="2004" name="Genome Res.">
        <title>The status, quality, and expansion of the NIH full-length cDNA project: the Mammalian Gene Collection (MGC).</title>
        <authorList>
            <consortium name="The MGC Project Team"/>
        </authorList>
    </citation>
    <scope>NUCLEOTIDE SEQUENCE [LARGE SCALE MRNA]</scope>
    <source>
        <tissue>Brain</tissue>
    </source>
</reference>
<reference key="3">
    <citation type="journal article" date="2019" name="Cell Death Differ.">
        <title>MICU3 is a tissue-specific enhancer of mitochondrial calcium uptake.</title>
        <authorList>
            <person name="Patron M."/>
            <person name="Granatiero V."/>
            <person name="Espino J."/>
            <person name="Rizzuto R."/>
            <person name="De Stefani D."/>
        </authorList>
    </citation>
    <scope>FUNCTION</scope>
    <scope>INTERACTION WITH MICU1</scope>
    <scope>DISULFIDE BOND</scope>
    <scope>TISSUE SPECIFICITY</scope>
    <scope>MUTAGENESIS OF ASP-245; GLU-256; ASP-483; GLU-494 AND CYS-522</scope>
</reference>
<reference evidence="11 12" key="4">
    <citation type="journal article" date="2019" name="Cell Rep.">
        <title>Dimerization of MICU proteins controls Ca2+ influx through the mitochondrial Ca2+ uniporter.</title>
        <authorList>
            <person name="Xing Y."/>
            <person name="Wang M."/>
            <person name="Wang J."/>
            <person name="Nie Z."/>
            <person name="Wu G."/>
            <person name="Yang X."/>
            <person name="Shen Y."/>
        </authorList>
    </citation>
    <scope>X-RAY CRYSTALLOGRAPHY (2.80 ANGSTROMS) OF 133-512 IN COMPLEX WITH CALCIUM</scope>
    <scope>DOMAIN</scope>
</reference>
<feature type="transit peptide" description="Mitochondrion" evidence="3">
    <location>
        <begin position="1"/>
        <end position="43"/>
    </location>
</feature>
<feature type="chain" id="PRO_0000251230" description="Calcium uptake protein 3, mitochondrial" evidence="3">
    <location>
        <begin position="44"/>
        <end position="530"/>
    </location>
</feature>
<feature type="domain" description="EF-hand 1" evidence="4">
    <location>
        <begin position="232"/>
        <end position="267"/>
    </location>
</feature>
<feature type="domain" description="EF-hand 2; degenerate" evidence="4">
    <location>
        <begin position="401"/>
        <end position="436"/>
    </location>
</feature>
<feature type="domain" description="EF-hand 3" evidence="4">
    <location>
        <begin position="470"/>
        <end position="505"/>
    </location>
</feature>
<feature type="region of interest" description="Disordered" evidence="5">
    <location>
        <begin position="92"/>
        <end position="115"/>
    </location>
</feature>
<feature type="binding site" evidence="7 11">
    <location>
        <position position="245"/>
    </location>
    <ligand>
        <name>Ca(2+)</name>
        <dbReference type="ChEBI" id="CHEBI:29108"/>
        <label>1</label>
    </ligand>
</feature>
<feature type="binding site" evidence="7 11">
    <location>
        <position position="247"/>
    </location>
    <ligand>
        <name>Ca(2+)</name>
        <dbReference type="ChEBI" id="CHEBI:29108"/>
        <label>1</label>
    </ligand>
</feature>
<feature type="binding site" evidence="7 11">
    <location>
        <position position="249"/>
    </location>
    <ligand>
        <name>Ca(2+)</name>
        <dbReference type="ChEBI" id="CHEBI:29108"/>
        <label>1</label>
    </ligand>
</feature>
<feature type="binding site" evidence="7 11">
    <location>
        <position position="251"/>
    </location>
    <ligand>
        <name>Ca(2+)</name>
        <dbReference type="ChEBI" id="CHEBI:29108"/>
        <label>1</label>
    </ligand>
</feature>
<feature type="binding site" evidence="7 11">
    <location>
        <position position="253"/>
    </location>
    <ligand>
        <name>Ca(2+)</name>
        <dbReference type="ChEBI" id="CHEBI:29108"/>
        <label>1</label>
    </ligand>
</feature>
<feature type="binding site" evidence="7 11">
    <location>
        <position position="256"/>
    </location>
    <ligand>
        <name>Ca(2+)</name>
        <dbReference type="ChEBI" id="CHEBI:29108"/>
        <label>1</label>
    </ligand>
</feature>
<feature type="binding site" evidence="7 11">
    <location>
        <position position="483"/>
    </location>
    <ligand>
        <name>Ca(2+)</name>
        <dbReference type="ChEBI" id="CHEBI:29108"/>
        <label>2</label>
    </ligand>
</feature>
<feature type="binding site" evidence="7 11">
    <location>
        <position position="485"/>
    </location>
    <ligand>
        <name>Ca(2+)</name>
        <dbReference type="ChEBI" id="CHEBI:29108"/>
        <label>2</label>
    </ligand>
</feature>
<feature type="binding site" evidence="7 11">
    <location>
        <position position="487"/>
    </location>
    <ligand>
        <name>Ca(2+)</name>
        <dbReference type="ChEBI" id="CHEBI:29108"/>
        <label>2</label>
    </ligand>
</feature>
<feature type="binding site" evidence="7 11">
    <location>
        <position position="489"/>
    </location>
    <ligand>
        <name>Ca(2+)</name>
        <dbReference type="ChEBI" id="CHEBI:29108"/>
        <label>2</label>
    </ligand>
</feature>
<feature type="binding site" evidence="7 11">
    <location>
        <position position="494"/>
    </location>
    <ligand>
        <name>Ca(2+)</name>
        <dbReference type="ChEBI" id="CHEBI:29108"/>
        <label>2</label>
    </ligand>
</feature>
<feature type="disulfide bond" description="Interchain (with C-465 in MICU1)" evidence="6">
    <location>
        <position position="522"/>
    </location>
</feature>
<feature type="mutagenesis site" description="In EF1(mut); abolished calcium-binding; when associated with K-256, A-483 and K-494." evidence="6">
    <original>D</original>
    <variation>A</variation>
    <location>
        <position position="245"/>
    </location>
</feature>
<feature type="mutagenesis site" description="In EF1(mut); abolished calcium-binding; when associated with A-245, A-483 and K-494." evidence="6">
    <original>E</original>
    <variation>K</variation>
    <location>
        <position position="256"/>
    </location>
</feature>
<feature type="mutagenesis site" description="In EF1(mut); abolished calcium-binding; when associated with A-245, K-256 and K-494." evidence="6">
    <original>D</original>
    <variation>A</variation>
    <location>
        <position position="483"/>
    </location>
</feature>
<feature type="mutagenesis site" description="In EF1(mut); abolished calcium-binding; when associated with A-245, K-256 and A-483." evidence="6">
    <original>E</original>
    <variation>K</variation>
    <location>
        <position position="494"/>
    </location>
</feature>
<feature type="mutagenesis site" description="Abolished interaction with MICU1." evidence="6">
    <original>C</original>
    <variation>A</variation>
    <location>
        <position position="522"/>
    </location>
</feature>
<feature type="sequence conflict" description="In Ref. 1; AAH32868." evidence="9" ref="1">
    <original>A</original>
    <variation>C</variation>
    <location>
        <position position="3"/>
    </location>
</feature>
<feature type="helix" evidence="13">
    <location>
        <begin position="136"/>
        <end position="139"/>
    </location>
</feature>
<feature type="helix" evidence="13">
    <location>
        <begin position="144"/>
        <end position="152"/>
    </location>
</feature>
<feature type="strand" evidence="13">
    <location>
        <begin position="155"/>
        <end position="157"/>
    </location>
</feature>
<feature type="strand" evidence="13">
    <location>
        <begin position="160"/>
        <end position="163"/>
    </location>
</feature>
<feature type="helix" evidence="13">
    <location>
        <begin position="165"/>
        <end position="173"/>
    </location>
</feature>
<feature type="strand" evidence="14">
    <location>
        <begin position="184"/>
        <end position="186"/>
    </location>
</feature>
<feature type="helix" evidence="13">
    <location>
        <begin position="188"/>
        <end position="196"/>
    </location>
</feature>
<feature type="helix" evidence="13">
    <location>
        <begin position="201"/>
        <end position="203"/>
    </location>
</feature>
<feature type="helix" evidence="13">
    <location>
        <begin position="208"/>
        <end position="211"/>
    </location>
</feature>
<feature type="strand" evidence="13">
    <location>
        <begin position="212"/>
        <end position="215"/>
    </location>
</feature>
<feature type="helix" evidence="13">
    <location>
        <begin position="220"/>
        <end position="231"/>
    </location>
</feature>
<feature type="helix" evidence="13">
    <location>
        <begin position="234"/>
        <end position="244"/>
    </location>
</feature>
<feature type="strand" evidence="13">
    <location>
        <begin position="249"/>
        <end position="252"/>
    </location>
</feature>
<feature type="helix" evidence="13">
    <location>
        <begin position="254"/>
        <end position="263"/>
    </location>
</feature>
<feature type="helix" evidence="13">
    <location>
        <begin position="277"/>
        <end position="288"/>
    </location>
</feature>
<feature type="helix" evidence="13">
    <location>
        <begin position="341"/>
        <end position="347"/>
    </location>
</feature>
<feature type="turn" evidence="13">
    <location>
        <begin position="348"/>
        <end position="351"/>
    </location>
</feature>
<feature type="helix" evidence="13">
    <location>
        <begin position="357"/>
        <end position="380"/>
    </location>
</feature>
<feature type="strand" evidence="13">
    <location>
        <begin position="383"/>
        <end position="386"/>
    </location>
</feature>
<feature type="helix" evidence="13">
    <location>
        <begin position="388"/>
        <end position="396"/>
    </location>
</feature>
<feature type="helix" evidence="13">
    <location>
        <begin position="404"/>
        <end position="414"/>
    </location>
</feature>
<feature type="helix" evidence="13">
    <location>
        <begin position="423"/>
        <end position="434"/>
    </location>
</feature>
<feature type="helix" evidence="13">
    <location>
        <begin position="436"/>
        <end position="448"/>
    </location>
</feature>
<feature type="helix" evidence="13">
    <location>
        <begin position="455"/>
        <end position="466"/>
    </location>
</feature>
<feature type="helix" evidence="13">
    <location>
        <begin position="472"/>
        <end position="482"/>
    </location>
</feature>
<feature type="strand" evidence="13">
    <location>
        <begin position="485"/>
        <end position="488"/>
    </location>
</feature>
<feature type="turn" evidence="13">
    <location>
        <begin position="492"/>
        <end position="495"/>
    </location>
</feature>
<feature type="helix" evidence="13">
    <location>
        <begin position="496"/>
        <end position="498"/>
    </location>
</feature>
<organism>
    <name type="scientific">Homo sapiens</name>
    <name type="common">Human</name>
    <dbReference type="NCBI Taxonomy" id="9606"/>
    <lineage>
        <taxon>Eukaryota</taxon>
        <taxon>Metazoa</taxon>
        <taxon>Chordata</taxon>
        <taxon>Craniata</taxon>
        <taxon>Vertebrata</taxon>
        <taxon>Euteleostomi</taxon>
        <taxon>Mammalia</taxon>
        <taxon>Eutheria</taxon>
        <taxon>Euarchontoglires</taxon>
        <taxon>Primates</taxon>
        <taxon>Haplorrhini</taxon>
        <taxon>Catarrhini</taxon>
        <taxon>Hominidae</taxon>
        <taxon>Homo</taxon>
    </lineage>
</organism>
<evidence type="ECO:0000250" key="1">
    <source>
        <dbReference type="UniProtKB" id="Q8IYU8"/>
    </source>
</evidence>
<evidence type="ECO:0000250" key="2">
    <source>
        <dbReference type="UniProtKB" id="Q9CTY5"/>
    </source>
</evidence>
<evidence type="ECO:0000255" key="3"/>
<evidence type="ECO:0000255" key="4">
    <source>
        <dbReference type="PROSITE-ProRule" id="PRU00448"/>
    </source>
</evidence>
<evidence type="ECO:0000256" key="5">
    <source>
        <dbReference type="SAM" id="MobiDB-lite"/>
    </source>
</evidence>
<evidence type="ECO:0000269" key="6">
    <source>
    </source>
</evidence>
<evidence type="ECO:0000269" key="7">
    <source>
    </source>
</evidence>
<evidence type="ECO:0000303" key="8">
    <source>
    </source>
</evidence>
<evidence type="ECO:0000305" key="9"/>
<evidence type="ECO:0000312" key="10">
    <source>
        <dbReference type="HGNC" id="HGNC:27820"/>
    </source>
</evidence>
<evidence type="ECO:0007744" key="11">
    <source>
        <dbReference type="PDB" id="6AGI"/>
    </source>
</evidence>
<evidence type="ECO:0007744" key="12">
    <source>
        <dbReference type="PDB" id="6AGJ"/>
    </source>
</evidence>
<evidence type="ECO:0007829" key="13">
    <source>
        <dbReference type="PDB" id="6AGI"/>
    </source>
</evidence>
<evidence type="ECO:0007829" key="14">
    <source>
        <dbReference type="PDB" id="6AGJ"/>
    </source>
</evidence>
<sequence length="530" mass="60711">MAALRRLLWPPPRVSPPLCAHQPLLGPWGRPAVTTLGLPGRPFSSREDEERAVAEAAWRRRRRWGELSVAAAAGGGLVGLVCYQLYGDPRAGSPATGRPSKSAATEPEDPPRGRGMLPIPVAAAKETVAIGRTDIEDLDLYATSRERRFRLFASIECEGQLFMTPYDFILAVTTDEPKVAKTWKSLSKQELNQMLAETPPVWKGSSKLFRNLKEKGVISYTEYLFLLCILTKPHAGFRIAFNMFDTDGNEMVDKKEFLVLQEIFRKKNEKREIKGDEEKRAMLRLQLYGYHSPTNSVLKTDAEELVSRSYWDTLRRNTSQALFSDLAERADDITSLVTDTTLLVHFFGKKGKAELNFEDFYRFMDNLQTEVLEIEFLSYSNGMNTISEEDFAHILLRYTNVENTSVFLENVRYSIPEEKGITFDEFRSFFQFLNNLEDFAIALNMYNFASRSIGQDEFKRAVYVATGLKFSPHLVNTVFKIFDVDKDDQLSYKEFIGIMKDRLHRGFRGYKTVQKYPTFKSCLKKELHSR</sequence>
<accession>Q86XE3</accession>
<accession>Q8IYZ3</accession>
<comment type="function">
    <text evidence="2 6">Tissue-specific calcium sensor of the mitochondrial calcium uniporter (MCU) channel, which specifically regulates MCU channel activity in the central nervous system and skeletal muscle (PubMed:29725115). Senses calcium level via its EF-hand domains: compared to MICU1 and MICU2, MICU3 has a higher affinity for calcium (PubMed:29725115). MICU1 and MICU3 form a disulfide-linked heterodimer that stimulates and inhibits MCU activity, depending on the concentration of calcium (PubMed:29725115). At low calcium levels, MICU1 occludes the pore of the MCU channel, preventing mitochondrial calcium uptake (PubMed:29725115). At higher calcium levels, calcium-binding to MICU1 and MICU3 induces a conformational change that weakens MCU-MICU1 interactions and moves the MICU1-MICU3 heterodimer away from the pore, allowing calcium permeation through the MCU channel (PubMed:29725115). The high calcium affinity of MICU3 lowers the calcium threshold necessary for calcium permeation through the MCU channel (PubMed:29725115). The MICU1-MICU3 heterodimer promotes flexibility of neurotransmission in neuronal cells by enhancing mitochondrial calcium uptake in presynapses (PubMed:29725115). It is also required to increase mitochondrial calcium uptake in skeletal muscle cells, thereby increasing ATP production (By similarity).</text>
</comment>
<comment type="subunit">
    <text evidence="1 6">Heterodimer; disulfide-linked; heterodimerizes with MICU1 (PubMed:29725115). Component of the uniplex complex, composed of MCU, EMRE/SMDT1, MICU1 and MICU3 in a 4:4:1:1 stoichiometry (By similarity).</text>
</comment>
<comment type="subcellular location">
    <subcellularLocation>
        <location evidence="1">Mitochondrion intermembrane space</location>
    </subcellularLocation>
    <subcellularLocation>
        <location evidence="1">Mitochondrion inner membrane</location>
    </subcellularLocation>
    <text evidence="1">Recruited to the mitochondrial inner membrane via its association with the uniplex complex.</text>
</comment>
<comment type="tissue specificity">
    <text evidence="6">Specifically expressed in the central nervous system and skeletal muscle.</text>
</comment>
<comment type="domain">
    <text evidence="7">EF-hand domains 1 and 3 have high affinity for calcium and act as sensors of mitochondrial matrix calcium levels (PubMed:30699349). EF-hand domain 2 is degenerate (PubMed:30699349).</text>
</comment>
<comment type="similarity">
    <text evidence="9">Belongs to the MICU1 family. MICU3 subfamily.</text>
</comment>
<comment type="sequence caution" evidence="9">
    <conflict type="frameshift">
        <sequence resource="EMBL-CDS" id="AAH32868"/>
    </conflict>
</comment>
<name>MICU3_HUMAN</name>
<keyword id="KW-0002">3D-structure</keyword>
<keyword id="KW-0106">Calcium</keyword>
<keyword id="KW-1015">Disulfide bond</keyword>
<keyword id="KW-0472">Membrane</keyword>
<keyword id="KW-0479">Metal-binding</keyword>
<keyword id="KW-0496">Mitochondrion</keyword>
<keyword id="KW-0999">Mitochondrion inner membrane</keyword>
<keyword id="KW-1267">Proteomics identification</keyword>
<keyword id="KW-1185">Reference proteome</keyword>
<keyword id="KW-0677">Repeat</keyword>
<keyword id="KW-0809">Transit peptide</keyword>
<protein>
    <recommendedName>
        <fullName evidence="9">Calcium uptake protein 3, mitochondrial</fullName>
        <shortName evidence="8">hMICU3</shortName>
    </recommendedName>
    <alternativeName>
        <fullName>EF-hand domain-containing family member A2</fullName>
    </alternativeName>
</protein>
<dbReference type="EMBL" id="AC079193">
    <property type="status" value="NOT_ANNOTATED_CDS"/>
    <property type="molecule type" value="Genomic_DNA"/>
</dbReference>
<dbReference type="EMBL" id="AC136305">
    <property type="status" value="NOT_ANNOTATED_CDS"/>
    <property type="molecule type" value="Genomic_DNA"/>
</dbReference>
<dbReference type="EMBL" id="BC032868">
    <property type="protein sequence ID" value="AAH32868.1"/>
    <property type="status" value="ALT_FRAME"/>
    <property type="molecule type" value="mRNA"/>
</dbReference>
<dbReference type="EMBL" id="BC045553">
    <property type="protein sequence ID" value="AAH45553.1"/>
    <property type="molecule type" value="mRNA"/>
</dbReference>
<dbReference type="CCDS" id="CCDS5999.1"/>
<dbReference type="RefSeq" id="NP_859074.1">
    <property type="nucleotide sequence ID" value="NM_181723.3"/>
</dbReference>
<dbReference type="PDB" id="6AGI">
    <property type="method" value="X-ray"/>
    <property type="resolution" value="2.80 A"/>
    <property type="chains" value="A/B=133-512"/>
</dbReference>
<dbReference type="PDB" id="6AGJ">
    <property type="method" value="X-ray"/>
    <property type="resolution" value="3.00 A"/>
    <property type="chains" value="A/B=133-512"/>
</dbReference>
<dbReference type="PDBsum" id="6AGI"/>
<dbReference type="PDBsum" id="6AGJ"/>
<dbReference type="SMR" id="Q86XE3"/>
<dbReference type="BioGRID" id="130297">
    <property type="interactions" value="16"/>
</dbReference>
<dbReference type="ComplexPortal" id="CPX-5965">
    <property type="entry name" value="Mitochondrial calcium uniporter complex, MICU1-MICU3 variant"/>
</dbReference>
<dbReference type="FunCoup" id="Q86XE3">
    <property type="interactions" value="441"/>
</dbReference>
<dbReference type="IntAct" id="Q86XE3">
    <property type="interactions" value="12"/>
</dbReference>
<dbReference type="STRING" id="9606.ENSP00000321455"/>
<dbReference type="GlyGen" id="Q86XE3">
    <property type="glycosylation" value="1 site, 1 O-linked glycan (1 site)"/>
</dbReference>
<dbReference type="iPTMnet" id="Q86XE3"/>
<dbReference type="PhosphoSitePlus" id="Q86XE3"/>
<dbReference type="BioMuta" id="MICU3"/>
<dbReference type="DMDM" id="74762459"/>
<dbReference type="jPOST" id="Q86XE3"/>
<dbReference type="MassIVE" id="Q86XE3"/>
<dbReference type="PaxDb" id="9606-ENSP00000321455"/>
<dbReference type="PeptideAtlas" id="Q86XE3"/>
<dbReference type="ProteomicsDB" id="70270"/>
<dbReference type="Pumba" id="Q86XE3"/>
<dbReference type="Antibodypedia" id="8886">
    <property type="antibodies" value="55 antibodies from 16 providers"/>
</dbReference>
<dbReference type="DNASU" id="286097"/>
<dbReference type="Ensembl" id="ENST00000318063.10">
    <property type="protein sequence ID" value="ENSP00000321455.5"/>
    <property type="gene ID" value="ENSG00000155970.12"/>
</dbReference>
<dbReference type="GeneID" id="286097"/>
<dbReference type="KEGG" id="hsa:286097"/>
<dbReference type="MANE-Select" id="ENST00000318063.10">
    <property type="protein sequence ID" value="ENSP00000321455.5"/>
    <property type="RefSeq nucleotide sequence ID" value="NM_181723.3"/>
    <property type="RefSeq protein sequence ID" value="NP_859074.1"/>
</dbReference>
<dbReference type="UCSC" id="uc003wxd.3">
    <property type="organism name" value="human"/>
</dbReference>
<dbReference type="AGR" id="HGNC:27820"/>
<dbReference type="CTD" id="286097"/>
<dbReference type="GeneCards" id="MICU3"/>
<dbReference type="HGNC" id="HGNC:27820">
    <property type="gene designation" value="MICU3"/>
</dbReference>
<dbReference type="HPA" id="ENSG00000155970">
    <property type="expression patterns" value="Tissue enhanced (brain)"/>
</dbReference>
<dbReference type="MIM" id="610633">
    <property type="type" value="gene"/>
</dbReference>
<dbReference type="neXtProt" id="NX_Q86XE3"/>
<dbReference type="OpenTargets" id="ENSG00000155970"/>
<dbReference type="PharmGKB" id="PA134953154"/>
<dbReference type="VEuPathDB" id="HostDB:ENSG00000155970"/>
<dbReference type="eggNOG" id="KOG2643">
    <property type="taxonomic scope" value="Eukaryota"/>
</dbReference>
<dbReference type="GeneTree" id="ENSGT00950000183079"/>
<dbReference type="HOGENOM" id="CLU_027103_0_2_1"/>
<dbReference type="InParanoid" id="Q86XE3"/>
<dbReference type="OMA" id="DEPAYPM"/>
<dbReference type="OrthoDB" id="5859791at2759"/>
<dbReference type="PAN-GO" id="Q86XE3">
    <property type="GO annotations" value="4 GO annotations based on evolutionary models"/>
</dbReference>
<dbReference type="PhylomeDB" id="Q86XE3"/>
<dbReference type="TreeFam" id="TF320374"/>
<dbReference type="PathwayCommons" id="Q86XE3"/>
<dbReference type="Reactome" id="R-HSA-8949215">
    <property type="pathway name" value="Mitochondrial calcium ion transport"/>
</dbReference>
<dbReference type="Reactome" id="R-HSA-8949664">
    <property type="pathway name" value="Processing of SMDT1"/>
</dbReference>
<dbReference type="SignaLink" id="Q86XE3"/>
<dbReference type="SIGNOR" id="Q86XE3"/>
<dbReference type="BioGRID-ORCS" id="286097">
    <property type="hits" value="13 hits in 1150 CRISPR screens"/>
</dbReference>
<dbReference type="ChiTaRS" id="MICU3">
    <property type="organism name" value="human"/>
</dbReference>
<dbReference type="GenomeRNAi" id="286097"/>
<dbReference type="Pharos" id="Q86XE3">
    <property type="development level" value="Tbio"/>
</dbReference>
<dbReference type="PRO" id="PR:Q86XE3"/>
<dbReference type="Proteomes" id="UP000005640">
    <property type="component" value="Chromosome 8"/>
</dbReference>
<dbReference type="RNAct" id="Q86XE3">
    <property type="molecule type" value="protein"/>
</dbReference>
<dbReference type="Bgee" id="ENSG00000155970">
    <property type="expression patterns" value="Expressed in cerebellar vermis and 166 other cell types or tissues"/>
</dbReference>
<dbReference type="ExpressionAtlas" id="Q86XE3">
    <property type="expression patterns" value="baseline and differential"/>
</dbReference>
<dbReference type="GO" id="GO:0005743">
    <property type="term" value="C:mitochondrial inner membrane"/>
    <property type="evidence" value="ECO:0000250"/>
    <property type="project" value="UniProt"/>
</dbReference>
<dbReference type="GO" id="GO:0005758">
    <property type="term" value="C:mitochondrial intermembrane space"/>
    <property type="evidence" value="ECO:0007669"/>
    <property type="project" value="UniProtKB-SubCell"/>
</dbReference>
<dbReference type="GO" id="GO:0005739">
    <property type="term" value="C:mitochondrion"/>
    <property type="evidence" value="ECO:0006056"/>
    <property type="project" value="FlyBase"/>
</dbReference>
<dbReference type="GO" id="GO:1990246">
    <property type="term" value="C:uniplex complex"/>
    <property type="evidence" value="ECO:0000250"/>
    <property type="project" value="ComplexPortal"/>
</dbReference>
<dbReference type="GO" id="GO:0005246">
    <property type="term" value="F:calcium channel regulator activity"/>
    <property type="evidence" value="ECO:0000314"/>
    <property type="project" value="UniProt"/>
</dbReference>
<dbReference type="GO" id="GO:0005509">
    <property type="term" value="F:calcium ion binding"/>
    <property type="evidence" value="ECO:0000318"/>
    <property type="project" value="GO_Central"/>
</dbReference>
<dbReference type="GO" id="GO:0061891">
    <property type="term" value="F:calcium ion sensor activity"/>
    <property type="evidence" value="ECO:0000314"/>
    <property type="project" value="UniProtKB"/>
</dbReference>
<dbReference type="GO" id="GO:0046982">
    <property type="term" value="F:protein heterodimerization activity"/>
    <property type="evidence" value="ECO:0000353"/>
    <property type="project" value="UniProtKB"/>
</dbReference>
<dbReference type="GO" id="GO:0036444">
    <property type="term" value="P:calcium import into the mitochondrion"/>
    <property type="evidence" value="ECO:0000314"/>
    <property type="project" value="UniProtKB"/>
</dbReference>
<dbReference type="GO" id="GO:0071277">
    <property type="term" value="P:cellular response to calcium ion"/>
    <property type="evidence" value="ECO:0000314"/>
    <property type="project" value="UniProt"/>
</dbReference>
<dbReference type="GO" id="GO:0051560">
    <property type="term" value="P:mitochondrial calcium ion homeostasis"/>
    <property type="evidence" value="ECO:0000318"/>
    <property type="project" value="GO_Central"/>
</dbReference>
<dbReference type="GO" id="GO:0001956">
    <property type="term" value="P:positive regulation of neurotransmitter secretion"/>
    <property type="evidence" value="ECO:0000250"/>
    <property type="project" value="UniProtKB"/>
</dbReference>
<dbReference type="CDD" id="cd16175">
    <property type="entry name" value="EFh_MICU3"/>
    <property type="match status" value="1"/>
</dbReference>
<dbReference type="FunFam" id="1.10.238.10:FF:000149">
    <property type="entry name" value="Mitochondrial calcium uptake family member 3"/>
    <property type="match status" value="1"/>
</dbReference>
<dbReference type="Gene3D" id="1.10.238.10">
    <property type="entry name" value="EF-hand"/>
    <property type="match status" value="2"/>
</dbReference>
<dbReference type="InterPro" id="IPR011992">
    <property type="entry name" value="EF-hand-dom_pair"/>
</dbReference>
<dbReference type="InterPro" id="IPR018247">
    <property type="entry name" value="EF_Hand_1_Ca_BS"/>
</dbReference>
<dbReference type="InterPro" id="IPR002048">
    <property type="entry name" value="EF_hand_dom"/>
</dbReference>
<dbReference type="InterPro" id="IPR039800">
    <property type="entry name" value="MICU1/2/3"/>
</dbReference>
<dbReference type="PANTHER" id="PTHR12294:SF10">
    <property type="entry name" value="CALCIUM UPTAKE PROTEIN 3, MITOCHONDRIAL"/>
    <property type="match status" value="1"/>
</dbReference>
<dbReference type="PANTHER" id="PTHR12294">
    <property type="entry name" value="EF HAND DOMAIN FAMILY A1,A2-RELATED"/>
    <property type="match status" value="1"/>
</dbReference>
<dbReference type="Pfam" id="PF13499">
    <property type="entry name" value="EF-hand_7"/>
    <property type="match status" value="1"/>
</dbReference>
<dbReference type="SMART" id="SM00054">
    <property type="entry name" value="EFh"/>
    <property type="match status" value="2"/>
</dbReference>
<dbReference type="SUPFAM" id="SSF47473">
    <property type="entry name" value="EF-hand"/>
    <property type="match status" value="2"/>
</dbReference>
<dbReference type="PROSITE" id="PS00018">
    <property type="entry name" value="EF_HAND_1"/>
    <property type="match status" value="1"/>
</dbReference>
<dbReference type="PROSITE" id="PS50222">
    <property type="entry name" value="EF_HAND_2"/>
    <property type="match status" value="3"/>
</dbReference>